<organism>
    <name type="scientific">Human herpesvirus 6A (strain Uganda-1102)</name>
    <name type="common">HHV-6 variant A</name>
    <name type="synonym">Human B lymphotropic virus</name>
    <dbReference type="NCBI Taxonomy" id="10370"/>
    <lineage>
        <taxon>Viruses</taxon>
        <taxon>Duplodnaviria</taxon>
        <taxon>Heunggongvirae</taxon>
        <taxon>Peploviricota</taxon>
        <taxon>Herviviricetes</taxon>
        <taxon>Herpesvirales</taxon>
        <taxon>Orthoherpesviridae</taxon>
        <taxon>Betaherpesvirinae</taxon>
        <taxon>Roseolovirus</taxon>
        <taxon>Roseolovirus humanbeta6a</taxon>
        <taxon>Human betaherpesvirus 6A</taxon>
    </lineage>
</organism>
<feature type="chain" id="PRO_0000343645" description="Uncharacterized protein U91">
    <location>
        <begin position="1"/>
        <end position="153"/>
    </location>
</feature>
<feature type="transmembrane region" description="Helical" evidence="1">
    <location>
        <begin position="16"/>
        <end position="36"/>
    </location>
</feature>
<feature type="transmembrane region" description="Helical" evidence="1">
    <location>
        <begin position="97"/>
        <end position="117"/>
    </location>
</feature>
<gene>
    <name type="primary">U91</name>
    <name type="synonym">HCRF1</name>
</gene>
<evidence type="ECO:0000255" key="1"/>
<evidence type="ECO:0000305" key="2"/>
<accession>Q69569</accession>
<accession>Q96893</accession>
<dbReference type="EMBL" id="X83413">
    <property type="protein sequence ID" value="CAA58340.2"/>
    <property type="molecule type" value="Genomic_DNA"/>
</dbReference>
<dbReference type="EMBL" id="D11134">
    <property type="protein sequence ID" value="BAA01905.1"/>
    <property type="status" value="ALT_SEQ"/>
    <property type="molecule type" value="Genomic_DNA"/>
</dbReference>
<dbReference type="PIR" id="JQ1629">
    <property type="entry name" value="JQ1629"/>
</dbReference>
<dbReference type="RefSeq" id="NP_042984.2">
    <property type="nucleotide sequence ID" value="NC_001664.2"/>
</dbReference>
<dbReference type="SMR" id="Q69569"/>
<dbReference type="GlyCosmos" id="Q69569">
    <property type="glycosylation" value="1 site, No reported glycans"/>
</dbReference>
<dbReference type="DNASU" id="1487969"/>
<dbReference type="GeneID" id="1487969"/>
<dbReference type="KEGG" id="vg:1487969"/>
<dbReference type="Proteomes" id="UP000009295">
    <property type="component" value="Segment"/>
</dbReference>
<dbReference type="GO" id="GO:0016020">
    <property type="term" value="C:membrane"/>
    <property type="evidence" value="ECO:0007669"/>
    <property type="project" value="UniProtKB-SubCell"/>
</dbReference>
<protein>
    <recommendedName>
        <fullName>Uncharacterized protein U91</fullName>
    </recommendedName>
</protein>
<sequence length="153" mass="16581">MGKKSSTGTGKTNLKILACLLLIFLMATIFLLILEIISGQRYSNDDSEGVTAALKHVSTPTTNCTETTTPDSVTSQAMENKESMKKNEGEPPVWIQALTTTLSIILLVCIIMACIICSRTTEEEKSEMQSSASSVETLQSLNEAIFPKGEMNV</sequence>
<name>U91_HHV6U</name>
<comment type="subcellular location">
    <subcellularLocation>
        <location evidence="2">Membrane</location>
        <topology evidence="2">Single-pass membrane protein</topology>
    </subcellularLocation>
</comment>
<comment type="sequence caution" evidence="2">
    <conflict type="miscellaneous discrepancy">
        <sequence resource="EMBL-CDS" id="BAA01905"/>
    </conflict>
    <text>Unusual initiator. The initiator methionine may be coded by a non-canonical AAG methionine codon.</text>
</comment>
<proteinExistence type="predicted"/>
<organismHost>
    <name type="scientific">Homo sapiens</name>
    <name type="common">Human</name>
    <dbReference type="NCBI Taxonomy" id="9606"/>
</organismHost>
<keyword id="KW-0472">Membrane</keyword>
<keyword id="KW-1185">Reference proteome</keyword>
<keyword id="KW-0812">Transmembrane</keyword>
<keyword id="KW-1133">Transmembrane helix</keyword>
<reference key="1">
    <citation type="journal article" date="1995" name="Virology">
        <title>The DNA sequence of human herpesvirus-6: structure, coding content, and genome evolution.</title>
        <authorList>
            <person name="Gompels U.A."/>
            <person name="Nicholas J."/>
            <person name="Lawrence G.L."/>
            <person name="Jones M."/>
            <person name="Thomson B.J."/>
            <person name="Martin M.E.D."/>
            <person name="Efstathiou S."/>
            <person name="Craxton M.A."/>
            <person name="Macaulay H.A."/>
        </authorList>
    </citation>
    <scope>NUCLEOTIDE SEQUENCE [LARGE SCALE GENOMIC DNA]</scope>
</reference>
<reference key="2">
    <citation type="journal article" date="1992" name="J. Gen. Virol.">
        <title>The right end of the unique region of the genome of human herpesvirus 6 U1102 contains a candidate immediate early gene enhancer and a homologue of the human cytomegalovirus US22 gene family.</title>
        <authorList>
            <person name="Thomson B.J."/>
            <person name="Honess R.W."/>
        </authorList>
    </citation>
    <scope>NUCLEOTIDE SEQUENCE [GENOMIC DNA]</scope>
</reference>